<dbReference type="EMBL" id="CR382123">
    <property type="protein sequence ID" value="CAH01615.1"/>
    <property type="molecule type" value="Genomic_DNA"/>
</dbReference>
<dbReference type="RefSeq" id="XP_452764.1">
    <property type="nucleotide sequence ID" value="XM_452764.1"/>
</dbReference>
<dbReference type="SMR" id="Q6CTH5"/>
<dbReference type="FunCoup" id="Q6CTH5">
    <property type="interactions" value="308"/>
</dbReference>
<dbReference type="STRING" id="284590.Q6CTH5"/>
<dbReference type="PaxDb" id="284590-Q6CTH5"/>
<dbReference type="KEGG" id="kla:KLLA0_C12672g"/>
<dbReference type="eggNOG" id="ENOG502S359">
    <property type="taxonomic scope" value="Eukaryota"/>
</dbReference>
<dbReference type="HOGENOM" id="CLU_023119_0_0_1"/>
<dbReference type="InParanoid" id="Q6CTH5"/>
<dbReference type="OMA" id="MYQNQFP"/>
<dbReference type="Proteomes" id="UP000000598">
    <property type="component" value="Chromosome C"/>
</dbReference>
<dbReference type="GO" id="GO:0000781">
    <property type="term" value="C:chromosome, telomeric region"/>
    <property type="evidence" value="ECO:0007669"/>
    <property type="project" value="UniProtKB-SubCell"/>
</dbReference>
<dbReference type="GO" id="GO:0005737">
    <property type="term" value="C:cytoplasm"/>
    <property type="evidence" value="ECO:0007669"/>
    <property type="project" value="UniProtKB-SubCell"/>
</dbReference>
<dbReference type="GO" id="GO:0005634">
    <property type="term" value="C:nucleus"/>
    <property type="evidence" value="ECO:0007669"/>
    <property type="project" value="UniProtKB-SubCell"/>
</dbReference>
<dbReference type="GO" id="GO:0003677">
    <property type="term" value="F:DNA binding"/>
    <property type="evidence" value="ECO:0007669"/>
    <property type="project" value="UniProtKB-KW"/>
</dbReference>
<dbReference type="GO" id="GO:0043130">
    <property type="term" value="F:ubiquitin binding"/>
    <property type="evidence" value="ECO:0007669"/>
    <property type="project" value="InterPro"/>
</dbReference>
<dbReference type="GO" id="GO:0006281">
    <property type="term" value="P:DNA repair"/>
    <property type="evidence" value="ECO:0007669"/>
    <property type="project" value="UniProtKB-KW"/>
</dbReference>
<dbReference type="CDD" id="cd14368">
    <property type="entry name" value="CUE_DEF1_like"/>
    <property type="match status" value="1"/>
</dbReference>
<dbReference type="InterPro" id="IPR003892">
    <property type="entry name" value="CUE"/>
</dbReference>
<dbReference type="InterPro" id="IPR041803">
    <property type="entry name" value="DEF1_CUE"/>
</dbReference>
<dbReference type="PROSITE" id="PS51140">
    <property type="entry name" value="CUE"/>
    <property type="match status" value="1"/>
</dbReference>
<name>DEF1_KLULA</name>
<protein>
    <recommendedName>
        <fullName>RNA polymerase II degradation factor 1</fullName>
    </recommendedName>
</protein>
<gene>
    <name type="primary">DEF1</name>
    <name type="ordered locus">KLLA0C12672g</name>
</gene>
<feature type="chain" id="PRO_0000405668" description="RNA polymerase II degradation factor 1">
    <location>
        <begin position="1"/>
        <end position="645"/>
    </location>
</feature>
<feature type="domain" description="CUE" evidence="2">
    <location>
        <begin position="16"/>
        <end position="58"/>
    </location>
</feature>
<feature type="region of interest" description="Disordered" evidence="3">
    <location>
        <begin position="57"/>
        <end position="421"/>
    </location>
</feature>
<feature type="region of interest" description="Disordered" evidence="3">
    <location>
        <begin position="452"/>
        <end position="521"/>
    </location>
</feature>
<feature type="region of interest" description="Disordered" evidence="3">
    <location>
        <begin position="555"/>
        <end position="645"/>
    </location>
</feature>
<feature type="compositionally biased region" description="Basic and acidic residues" evidence="3">
    <location>
        <begin position="60"/>
        <end position="81"/>
    </location>
</feature>
<feature type="compositionally biased region" description="Low complexity" evidence="3">
    <location>
        <begin position="83"/>
        <end position="95"/>
    </location>
</feature>
<feature type="compositionally biased region" description="Polar residues" evidence="3">
    <location>
        <begin position="118"/>
        <end position="139"/>
    </location>
</feature>
<feature type="compositionally biased region" description="Basic and acidic residues" evidence="3">
    <location>
        <begin position="140"/>
        <end position="153"/>
    </location>
</feature>
<feature type="compositionally biased region" description="Low complexity" evidence="3">
    <location>
        <begin position="162"/>
        <end position="173"/>
    </location>
</feature>
<feature type="compositionally biased region" description="Basic and acidic residues" evidence="3">
    <location>
        <begin position="176"/>
        <end position="190"/>
    </location>
</feature>
<feature type="compositionally biased region" description="Polar residues" evidence="3">
    <location>
        <begin position="191"/>
        <end position="204"/>
    </location>
</feature>
<feature type="compositionally biased region" description="Low complexity" evidence="3">
    <location>
        <begin position="264"/>
        <end position="279"/>
    </location>
</feature>
<feature type="compositionally biased region" description="Basic and acidic residues" evidence="3">
    <location>
        <begin position="280"/>
        <end position="292"/>
    </location>
</feature>
<feature type="compositionally biased region" description="Polar residues" evidence="3">
    <location>
        <begin position="294"/>
        <end position="307"/>
    </location>
</feature>
<feature type="compositionally biased region" description="Low complexity" evidence="3">
    <location>
        <begin position="309"/>
        <end position="327"/>
    </location>
</feature>
<feature type="compositionally biased region" description="Low complexity" evidence="3">
    <location>
        <begin position="336"/>
        <end position="362"/>
    </location>
</feature>
<feature type="compositionally biased region" description="Polar residues" evidence="3">
    <location>
        <begin position="373"/>
        <end position="383"/>
    </location>
</feature>
<feature type="compositionally biased region" description="Low complexity" evidence="3">
    <location>
        <begin position="395"/>
        <end position="421"/>
    </location>
</feature>
<feature type="compositionally biased region" description="Low complexity" evidence="3">
    <location>
        <begin position="454"/>
        <end position="490"/>
    </location>
</feature>
<feature type="compositionally biased region" description="Low complexity" evidence="3">
    <location>
        <begin position="509"/>
        <end position="521"/>
    </location>
</feature>
<feature type="compositionally biased region" description="Low complexity" evidence="3">
    <location>
        <begin position="567"/>
        <end position="626"/>
    </location>
</feature>
<feature type="compositionally biased region" description="Polar residues" evidence="3">
    <location>
        <begin position="634"/>
        <end position="645"/>
    </location>
</feature>
<accession>Q6CTH5</accession>
<keyword id="KW-0158">Chromosome</keyword>
<keyword id="KW-0963">Cytoplasm</keyword>
<keyword id="KW-0227">DNA damage</keyword>
<keyword id="KW-0234">DNA repair</keyword>
<keyword id="KW-0238">DNA-binding</keyword>
<keyword id="KW-0539">Nucleus</keyword>
<keyword id="KW-1185">Reference proteome</keyword>
<keyword id="KW-0779">Telomere</keyword>
<keyword id="KW-0832">Ubl conjugation</keyword>
<keyword id="KW-0833">Ubl conjugation pathway</keyword>
<organism>
    <name type="scientific">Kluyveromyces lactis (strain ATCC 8585 / CBS 2359 / DSM 70799 / NBRC 1267 / NRRL Y-1140 / WM37)</name>
    <name type="common">Yeast</name>
    <name type="synonym">Candida sphaerica</name>
    <dbReference type="NCBI Taxonomy" id="284590"/>
    <lineage>
        <taxon>Eukaryota</taxon>
        <taxon>Fungi</taxon>
        <taxon>Dikarya</taxon>
        <taxon>Ascomycota</taxon>
        <taxon>Saccharomycotina</taxon>
        <taxon>Saccharomycetes</taxon>
        <taxon>Saccharomycetales</taxon>
        <taxon>Saccharomycetaceae</taxon>
        <taxon>Kluyveromyces</taxon>
    </lineage>
</organism>
<proteinExistence type="inferred from homology"/>
<comment type="function">
    <text evidence="1">Recruits the ubiquitination machinery to RNA polymerase II for polyubiquitination, removal and degradation, when the transcription-coupled repair (TCR) factor RAD26 fails to efficiently displace stalled RNA polymerase II. Also involved in telomere length regulation. Binds DNA.</text>
</comment>
<comment type="subunit">
    <text evidence="1">Homodimer; may form higher order oligomers. Interacts with the large RNA polymerase II subunit RPO21; the interaction is direct and serves to bridge RPO21 to the Elongin complex in a manner dependent on transcription stress. Interacts with RAD26.</text>
</comment>
<comment type="subcellular location">
    <subcellularLocation>
        <location evidence="1">Cytoplasm</location>
    </subcellularLocation>
    <subcellularLocation>
        <location evidence="1">Nucleus</location>
    </subcellularLocation>
    <subcellularLocation>
        <location evidence="1">Chromosome</location>
        <location evidence="1">Telomere</location>
    </subcellularLocation>
    <text evidence="1">During transcription stress, localizes to the nucleus following proteolytic cleavage by the proteasome.</text>
</comment>
<comment type="PTM">
    <text evidence="1">Ubiquitinated.</text>
</comment>
<comment type="PTM">
    <text evidence="1">Proteolytically cleaved by the proteasome in response to transcription stress; the resulting N-terminal form constitutes the activated nuclear form and the C-terminal portion is degraded.</text>
</comment>
<comment type="similarity">
    <text evidence="4">Belongs to the DEF1 family.</text>
</comment>
<reference key="1">
    <citation type="journal article" date="2004" name="Nature">
        <title>Genome evolution in yeasts.</title>
        <authorList>
            <person name="Dujon B."/>
            <person name="Sherman D."/>
            <person name="Fischer G."/>
            <person name="Durrens P."/>
            <person name="Casaregola S."/>
            <person name="Lafontaine I."/>
            <person name="de Montigny J."/>
            <person name="Marck C."/>
            <person name="Neuveglise C."/>
            <person name="Talla E."/>
            <person name="Goffard N."/>
            <person name="Frangeul L."/>
            <person name="Aigle M."/>
            <person name="Anthouard V."/>
            <person name="Babour A."/>
            <person name="Barbe V."/>
            <person name="Barnay S."/>
            <person name="Blanchin S."/>
            <person name="Beckerich J.-M."/>
            <person name="Beyne E."/>
            <person name="Bleykasten C."/>
            <person name="Boisrame A."/>
            <person name="Boyer J."/>
            <person name="Cattolico L."/>
            <person name="Confanioleri F."/>
            <person name="de Daruvar A."/>
            <person name="Despons L."/>
            <person name="Fabre E."/>
            <person name="Fairhead C."/>
            <person name="Ferry-Dumazet H."/>
            <person name="Groppi A."/>
            <person name="Hantraye F."/>
            <person name="Hennequin C."/>
            <person name="Jauniaux N."/>
            <person name="Joyet P."/>
            <person name="Kachouri R."/>
            <person name="Kerrest A."/>
            <person name="Koszul R."/>
            <person name="Lemaire M."/>
            <person name="Lesur I."/>
            <person name="Ma L."/>
            <person name="Muller H."/>
            <person name="Nicaud J.-M."/>
            <person name="Nikolski M."/>
            <person name="Oztas S."/>
            <person name="Ozier-Kalogeropoulos O."/>
            <person name="Pellenz S."/>
            <person name="Potier S."/>
            <person name="Richard G.-F."/>
            <person name="Straub M.-L."/>
            <person name="Suleau A."/>
            <person name="Swennen D."/>
            <person name="Tekaia F."/>
            <person name="Wesolowski-Louvel M."/>
            <person name="Westhof E."/>
            <person name="Wirth B."/>
            <person name="Zeniou-Meyer M."/>
            <person name="Zivanovic Y."/>
            <person name="Bolotin-Fukuhara M."/>
            <person name="Thierry A."/>
            <person name="Bouchier C."/>
            <person name="Caudron B."/>
            <person name="Scarpelli C."/>
            <person name="Gaillardin C."/>
            <person name="Weissenbach J."/>
            <person name="Wincker P."/>
            <person name="Souciet J.-L."/>
        </authorList>
    </citation>
    <scope>NUCLEOTIDE SEQUENCE [LARGE SCALE GENOMIC DNA]</scope>
    <source>
        <strain>ATCC 8585 / CBS 2359 / DSM 70799 / NBRC 1267 / NRRL Y-1140 / WM37</strain>
    </source>
</reference>
<evidence type="ECO:0000250" key="1">
    <source>
        <dbReference type="UniProtKB" id="P35732"/>
    </source>
</evidence>
<evidence type="ECO:0000255" key="2">
    <source>
        <dbReference type="PROSITE-ProRule" id="PRU00468"/>
    </source>
</evidence>
<evidence type="ECO:0000256" key="3">
    <source>
        <dbReference type="SAM" id="MobiDB-lite"/>
    </source>
</evidence>
<evidence type="ECO:0000305" key="4"/>
<sequence length="645" mass="71618">MSQFKRNASSKKLDSETKYKLETLSELFPDWTNDDLIDLVREYDDLETIVDKITTGAVTKWDEVKKPSKKEKPASHIEHQSHSSHQQLQQQAASHLDPEDSPSLINQHHSHQRQSRSTSKFSNNSANGKSVQQRQQHQSNNKDNKKQPSKDSLKPAPLPSKSNAGNNAGSWAAVLAEKKKAHEKKIDHTKSSNTIAHESTNEQSESNEHTEPTEVEVAPAQPVDSAPESVSHQHAPESESIATTNGDSKPKSWADIASAKSRQRQLQQQNKKQQQQQKSKPLDNFDALKEEVDQLSSEQTENGNHAISQEPEQQQQPYAQQSTFEEPAQQEEEVVAETTEQQQSQQPQQEEPAQPEVSQVQETAPVSLPEETNAANGVSNIQFGSEDKAAQQTLASQNYYQQQPNQQYAPQQVPQSAAAAAAAQAQAQQYYMYQNQFGYSYPGMFDNQSYLGYGQQFGAPQVPQGQVQPGQQAQPGQQPAAGSPNAQQGQTASAYGAPSGTGYQSQEVPQQSPAQQHVQPQQYSGYGMPYMYYQQSFPYGQPQYGMAGQYPYQMPKAGYNYYPPQPQSQQQGGQAQGSTQSQVEEEQANGQQGGANANAANASQQYQQYYQYQQAQTQPQQQAQQGMPYGYSSYDYSSQTSRGFY</sequence>